<keyword id="KW-0251">Elongation factor</keyword>
<keyword id="KW-0648">Protein biosynthesis</keyword>
<keyword id="KW-1185">Reference proteome</keyword>
<evidence type="ECO:0000255" key="1">
    <source>
        <dbReference type="HAMAP-Rule" id="MF_00043"/>
    </source>
</evidence>
<dbReference type="EMBL" id="CP000505">
    <property type="protein sequence ID" value="ABL78063.1"/>
    <property type="molecule type" value="Genomic_DNA"/>
</dbReference>
<dbReference type="RefSeq" id="WP_011752328.1">
    <property type="nucleotide sequence ID" value="NC_008698.1"/>
</dbReference>
<dbReference type="SMR" id="A1RXY3"/>
<dbReference type="STRING" id="368408.Tpen_0661"/>
<dbReference type="EnsemblBacteria" id="ABL78063">
    <property type="protein sequence ID" value="ABL78063"/>
    <property type="gene ID" value="Tpen_0661"/>
</dbReference>
<dbReference type="GeneID" id="4601619"/>
<dbReference type="KEGG" id="tpe:Tpen_0661"/>
<dbReference type="eggNOG" id="arCOG01988">
    <property type="taxonomic scope" value="Archaea"/>
</dbReference>
<dbReference type="HOGENOM" id="CLU_165896_1_0_2"/>
<dbReference type="OrthoDB" id="84643at2157"/>
<dbReference type="Proteomes" id="UP000000641">
    <property type="component" value="Chromosome"/>
</dbReference>
<dbReference type="GO" id="GO:0003746">
    <property type="term" value="F:translation elongation factor activity"/>
    <property type="evidence" value="ECO:0007669"/>
    <property type="project" value="UniProtKB-UniRule"/>
</dbReference>
<dbReference type="CDD" id="cd00292">
    <property type="entry name" value="EF1B"/>
    <property type="match status" value="1"/>
</dbReference>
<dbReference type="Gene3D" id="3.30.70.60">
    <property type="match status" value="1"/>
</dbReference>
<dbReference type="HAMAP" id="MF_00043">
    <property type="entry name" value="EF1_beta"/>
    <property type="match status" value="1"/>
</dbReference>
<dbReference type="InterPro" id="IPR036219">
    <property type="entry name" value="eEF-1beta-like_sf"/>
</dbReference>
<dbReference type="InterPro" id="IPR014038">
    <property type="entry name" value="EF1B_bsu/dsu_GNE"/>
</dbReference>
<dbReference type="InterPro" id="IPR014717">
    <property type="entry name" value="Transl_elong_EF1B/ribsomal_bS6"/>
</dbReference>
<dbReference type="InterPro" id="IPR004542">
    <property type="entry name" value="Transl_elong_EF1B_B_arc"/>
</dbReference>
<dbReference type="NCBIfam" id="TIGR00489">
    <property type="entry name" value="aEF-1_beta"/>
    <property type="match status" value="1"/>
</dbReference>
<dbReference type="NCBIfam" id="NF001670">
    <property type="entry name" value="PRK00435.1"/>
    <property type="match status" value="1"/>
</dbReference>
<dbReference type="PANTHER" id="PTHR39647">
    <property type="entry name" value="ELONGATION FACTOR 1-BETA"/>
    <property type="match status" value="1"/>
</dbReference>
<dbReference type="PANTHER" id="PTHR39647:SF1">
    <property type="entry name" value="ELONGATION FACTOR 1-BETA"/>
    <property type="match status" value="1"/>
</dbReference>
<dbReference type="Pfam" id="PF00736">
    <property type="entry name" value="EF1_GNE"/>
    <property type="match status" value="1"/>
</dbReference>
<dbReference type="PIRSF" id="PIRSF006521">
    <property type="entry name" value="Transl_elong_EF1B_B_arc"/>
    <property type="match status" value="1"/>
</dbReference>
<dbReference type="SMART" id="SM00888">
    <property type="entry name" value="EF1_GNE"/>
    <property type="match status" value="1"/>
</dbReference>
<dbReference type="SUPFAM" id="SSF54984">
    <property type="entry name" value="eEF-1beta-like"/>
    <property type="match status" value="1"/>
</dbReference>
<organism>
    <name type="scientific">Thermofilum pendens (strain DSM 2475 / Hrk 5)</name>
    <dbReference type="NCBI Taxonomy" id="368408"/>
    <lineage>
        <taxon>Archaea</taxon>
        <taxon>Thermoproteota</taxon>
        <taxon>Thermoprotei</taxon>
        <taxon>Thermofilales</taxon>
        <taxon>Thermofilaceae</taxon>
        <taxon>Thermofilum</taxon>
    </lineage>
</organism>
<reference key="1">
    <citation type="journal article" date="2008" name="J. Bacteriol.">
        <title>Genome sequence of Thermofilum pendens reveals an exceptional loss of biosynthetic pathways without genome reduction.</title>
        <authorList>
            <person name="Anderson I."/>
            <person name="Rodriguez J."/>
            <person name="Susanti D."/>
            <person name="Porat I."/>
            <person name="Reich C."/>
            <person name="Ulrich L.E."/>
            <person name="Elkins J.G."/>
            <person name="Mavromatis K."/>
            <person name="Lykidis A."/>
            <person name="Kim E."/>
            <person name="Thompson L.S."/>
            <person name="Nolan M."/>
            <person name="Land M."/>
            <person name="Copeland A."/>
            <person name="Lapidus A."/>
            <person name="Lucas S."/>
            <person name="Detter C."/>
            <person name="Zhulin I.B."/>
            <person name="Olsen G.J."/>
            <person name="Whitman W."/>
            <person name="Mukhopadhyay B."/>
            <person name="Bristow J."/>
            <person name="Kyrpides N."/>
        </authorList>
    </citation>
    <scope>NUCLEOTIDE SEQUENCE [LARGE SCALE GENOMIC DNA]</scope>
    <source>
        <strain>DSM 2475 / Hrk 5</strain>
    </source>
</reference>
<protein>
    <recommendedName>
        <fullName evidence="1">Elongation factor 1-beta</fullName>
        <shortName evidence="1">EF-1-beta</shortName>
    </recommendedName>
    <alternativeName>
        <fullName evidence="1">aEF-1beta</fullName>
    </alternativeName>
</protein>
<accession>A1RXY3</accession>
<name>EF1B_THEPD</name>
<comment type="function">
    <text evidence="1">Promotes the exchange of GDP for GTP in EF-1-alpha/GDP, thus allowing the regeneration of EF-1-alpha/GTP that could then be used to form the ternary complex EF-1-alpha/GTP/AAtRNA.</text>
</comment>
<comment type="similarity">
    <text evidence="1">Belongs to the EF-1-beta/EF-1-delta family.</text>
</comment>
<proteinExistence type="inferred from homology"/>
<sequence>MSKVAVLLRVLPDDAETKPEELYKKIAAALPEKYQVAQYQAEPIAFGLEALRMVILMPEETEGGTEELETIIQSVQGVSQVDVLNVTRFSG</sequence>
<gene>
    <name evidence="1" type="primary">ef1b</name>
    <name type="ordered locus">Tpen_0661</name>
</gene>
<feature type="chain" id="PRO_0000366441" description="Elongation factor 1-beta">
    <location>
        <begin position="1"/>
        <end position="91"/>
    </location>
</feature>